<evidence type="ECO:0000250" key="1">
    <source>
        <dbReference type="UniProtKB" id="Q3B820"/>
    </source>
</evidence>
<evidence type="ECO:0000255" key="2"/>
<evidence type="ECO:0000256" key="3">
    <source>
        <dbReference type="SAM" id="MobiDB-lite"/>
    </source>
</evidence>
<evidence type="ECO:0000305" key="4"/>
<sequence length="647" mass="75327">MAQAHRESVLAAACVRTPVNPYTKAPLTLYERELGDRPHPSASVSPRGPARTSMEVPADLESRFCKTRRCQDWVFDISDIHHSEKDYYVQVEKLKNAHLHNMEQLEKMYDRKLHLNGVHNPENEKRVAEDVYRSAWEPKSLLPAQHDHLKQSRSVSPSLAESSHESTDEDYGDSEHSVSARNKILHMWNEFTVEDYVRDSEYFSQEIAKNKTSKKSKEWSHKITIPEPFQMTVRESKKREMNIKSKSEIELENNLLKEKLEEEAECQKKFRANPVPSSVYLPLYQEIVERNEERRRFVKEKSKEILLATQKPFQFIEREERKKTLRLDLMQFSTSETSTSHFKAKPVPKSIYGTSIVERLKEEELYRGIRTHMRAQELLQSSSYPTSTLASGAHSGTKKGRCYKLKGKQEHKPKISDTIPHFQTIHENQQKRLLESKSAKHVTLCEPFQLRTSNITSHKEKIEMDIQADEENLKETRWPYKSPRASAQIHSAGTMNLRLETLSQTPRSTESSKRREYAIRKREKQRTKDYMKELEAMEQRVLNKPLLIERVAQRNALLSAEKQYLNVLHELGLCEEFVTKNGQSSSVDEHVGVREEKKIPQGESTEGTLALEDLLDDEEDDKYDCESEEAEEEDAYSTDEDHRIEEI</sequence>
<gene>
    <name type="primary">fam161a</name>
</gene>
<reference key="1">
    <citation type="submission" date="2004-08" db="EMBL/GenBank/DDBJ databases">
        <authorList>
            <consortium name="NIH - Xenopus Gene Collection (XGC) project"/>
        </authorList>
    </citation>
    <scope>NUCLEOTIDE SEQUENCE [LARGE SCALE MRNA]</scope>
    <source>
        <tissue>Kidney</tissue>
    </source>
</reference>
<comment type="function">
    <text evidence="1">Involved in ciliogenesis.</text>
</comment>
<comment type="subcellular location">
    <subcellularLocation>
        <location evidence="1">Cytoplasm</location>
        <location evidence="1">Cytoskeleton</location>
        <location evidence="1">Cilium basal body</location>
    </subcellularLocation>
    <subcellularLocation>
        <location evidence="1">Cell projection</location>
        <location evidence="1">Cilium</location>
    </subcellularLocation>
    <subcellularLocation>
        <location evidence="1">Cytoplasm</location>
        <location evidence="1">Cytoskeleton</location>
        <location evidence="1">Microtubule organizing center</location>
        <location evidence="1">Centrosome</location>
        <location evidence="1">Centriole</location>
    </subcellularLocation>
    <text evidence="1">Localized in the region between the outer and inner photoreceptor segments, corresponding to the photoreceptor connecting cilium. Localizes to the inner scaffold in the central region of centrioles.</text>
</comment>
<comment type="similarity">
    <text evidence="4">Belongs to the FAM161 family.</text>
</comment>
<dbReference type="EMBL" id="BC080431">
    <property type="protein sequence ID" value="AAH80431.1"/>
    <property type="molecule type" value="mRNA"/>
</dbReference>
<dbReference type="RefSeq" id="NP_001087604.1">
    <property type="nucleotide sequence ID" value="NM_001094135.1"/>
</dbReference>
<dbReference type="SMR" id="Q66KE9"/>
<dbReference type="GeneID" id="447428"/>
<dbReference type="KEGG" id="xla:447428"/>
<dbReference type="AGR" id="Xenbase:XB-GENE-5821040"/>
<dbReference type="CTD" id="447428"/>
<dbReference type="OrthoDB" id="2150121at2759"/>
<dbReference type="Proteomes" id="UP000186698">
    <property type="component" value="Chromosome 5L"/>
</dbReference>
<dbReference type="Bgee" id="447428">
    <property type="expression patterns" value="Expressed in testis and 12 other cell types or tissues"/>
</dbReference>
<dbReference type="GO" id="GO:0005814">
    <property type="term" value="C:centriole"/>
    <property type="evidence" value="ECO:0000250"/>
    <property type="project" value="UniProtKB"/>
</dbReference>
<dbReference type="GO" id="GO:0036064">
    <property type="term" value="C:ciliary basal body"/>
    <property type="evidence" value="ECO:0007669"/>
    <property type="project" value="TreeGrafter"/>
</dbReference>
<dbReference type="GO" id="GO:0005737">
    <property type="term" value="C:cytoplasm"/>
    <property type="evidence" value="ECO:0007669"/>
    <property type="project" value="UniProtKB-KW"/>
</dbReference>
<dbReference type="GO" id="GO:0032391">
    <property type="term" value="C:photoreceptor connecting cilium"/>
    <property type="evidence" value="ECO:0000318"/>
    <property type="project" value="GO_Central"/>
</dbReference>
<dbReference type="GO" id="GO:0044782">
    <property type="term" value="P:cilium organization"/>
    <property type="evidence" value="ECO:0000318"/>
    <property type="project" value="GO_Central"/>
</dbReference>
<dbReference type="InterPro" id="IPR051655">
    <property type="entry name" value="FAM161"/>
</dbReference>
<dbReference type="InterPro" id="IPR019579">
    <property type="entry name" value="FAM161A/B"/>
</dbReference>
<dbReference type="PANTHER" id="PTHR21501">
    <property type="entry name" value="PROTEIN FAM-161"/>
    <property type="match status" value="1"/>
</dbReference>
<dbReference type="PANTHER" id="PTHR21501:SF3">
    <property type="entry name" value="PROTEIN FAM161A"/>
    <property type="match status" value="1"/>
</dbReference>
<dbReference type="Pfam" id="PF10595">
    <property type="entry name" value="FAM161A_B"/>
    <property type="match status" value="1"/>
</dbReference>
<organism>
    <name type="scientific">Xenopus laevis</name>
    <name type="common">African clawed frog</name>
    <dbReference type="NCBI Taxonomy" id="8355"/>
    <lineage>
        <taxon>Eukaryota</taxon>
        <taxon>Metazoa</taxon>
        <taxon>Chordata</taxon>
        <taxon>Craniata</taxon>
        <taxon>Vertebrata</taxon>
        <taxon>Euteleostomi</taxon>
        <taxon>Amphibia</taxon>
        <taxon>Batrachia</taxon>
        <taxon>Anura</taxon>
        <taxon>Pipoidea</taxon>
        <taxon>Pipidae</taxon>
        <taxon>Xenopodinae</taxon>
        <taxon>Xenopus</taxon>
        <taxon>Xenopus</taxon>
    </lineage>
</organism>
<proteinExistence type="evidence at transcript level"/>
<name>F161A_XENLA</name>
<keyword id="KW-0966">Cell projection</keyword>
<keyword id="KW-0969">Cilium</keyword>
<keyword id="KW-0970">Cilium biogenesis/degradation</keyword>
<keyword id="KW-0175">Coiled coil</keyword>
<keyword id="KW-0963">Cytoplasm</keyword>
<keyword id="KW-0206">Cytoskeleton</keyword>
<keyword id="KW-1185">Reference proteome</keyword>
<protein>
    <recommendedName>
        <fullName>Protein FAM161A</fullName>
    </recommendedName>
</protein>
<accession>Q66KE9</accession>
<feature type="chain" id="PRO_0000329055" description="Protein FAM161A">
    <location>
        <begin position="1"/>
        <end position="647"/>
    </location>
</feature>
<feature type="region of interest" description="Disordered" evidence="3">
    <location>
        <begin position="32"/>
        <end position="55"/>
    </location>
</feature>
<feature type="region of interest" description="Disordered" evidence="3">
    <location>
        <begin position="143"/>
        <end position="175"/>
    </location>
</feature>
<feature type="region of interest" description="Disordered" evidence="3">
    <location>
        <begin position="504"/>
        <end position="524"/>
    </location>
</feature>
<feature type="region of interest" description="Disordered" evidence="3">
    <location>
        <begin position="588"/>
        <end position="647"/>
    </location>
</feature>
<feature type="coiled-coil region" evidence="2">
    <location>
        <begin position="243"/>
        <end position="268"/>
    </location>
</feature>
<feature type="coiled-coil region" evidence="2">
    <location>
        <begin position="518"/>
        <end position="544"/>
    </location>
</feature>
<feature type="compositionally biased region" description="Polar residues" evidence="3">
    <location>
        <begin position="152"/>
        <end position="161"/>
    </location>
</feature>
<feature type="compositionally biased region" description="Basic and acidic residues" evidence="3">
    <location>
        <begin position="510"/>
        <end position="524"/>
    </location>
</feature>
<feature type="compositionally biased region" description="Basic and acidic residues" evidence="3">
    <location>
        <begin position="588"/>
        <end position="600"/>
    </location>
</feature>
<feature type="compositionally biased region" description="Acidic residues" evidence="3">
    <location>
        <begin position="613"/>
        <end position="638"/>
    </location>
</feature>